<dbReference type="EC" id="2.3.1.-" evidence="12"/>
<dbReference type="EMBL" id="EQ963475">
    <property type="protein sequence ID" value="EED53479.1"/>
    <property type="molecule type" value="Genomic_DNA"/>
</dbReference>
<dbReference type="RefSeq" id="XP_002376725.1">
    <property type="nucleotide sequence ID" value="XM_002376684.1"/>
</dbReference>
<dbReference type="SMR" id="B8N8R0"/>
<dbReference type="STRING" id="332952.B8N8R0"/>
<dbReference type="EnsemblFungi" id="EED53479">
    <property type="protein sequence ID" value="EED53479"/>
    <property type="gene ID" value="AFLA_108550"/>
</dbReference>
<dbReference type="VEuPathDB" id="FungiDB:AFLA_006787"/>
<dbReference type="eggNOG" id="KOG1202">
    <property type="taxonomic scope" value="Eukaryota"/>
</dbReference>
<dbReference type="HOGENOM" id="CLU_000022_6_1_1"/>
<dbReference type="OMA" id="IALCRLW"/>
<dbReference type="GO" id="GO:0004315">
    <property type="term" value="F:3-oxoacyl-[acyl-carrier-protein] synthase activity"/>
    <property type="evidence" value="ECO:0007669"/>
    <property type="project" value="InterPro"/>
</dbReference>
<dbReference type="GO" id="GO:0004312">
    <property type="term" value="F:fatty acid synthase activity"/>
    <property type="evidence" value="ECO:0007669"/>
    <property type="project" value="TreeGrafter"/>
</dbReference>
<dbReference type="GO" id="GO:0006633">
    <property type="term" value="P:fatty acid biosynthetic process"/>
    <property type="evidence" value="ECO:0007669"/>
    <property type="project" value="InterPro"/>
</dbReference>
<dbReference type="GO" id="GO:0044550">
    <property type="term" value="P:secondary metabolite biosynthetic process"/>
    <property type="evidence" value="ECO:0007669"/>
    <property type="project" value="TreeGrafter"/>
</dbReference>
<dbReference type="CDD" id="cd00833">
    <property type="entry name" value="PKS"/>
    <property type="match status" value="1"/>
</dbReference>
<dbReference type="Gene3D" id="3.30.70.3290">
    <property type="match status" value="1"/>
</dbReference>
<dbReference type="Gene3D" id="3.40.47.10">
    <property type="match status" value="1"/>
</dbReference>
<dbReference type="Gene3D" id="1.10.1200.10">
    <property type="entry name" value="ACP-like"/>
    <property type="match status" value="1"/>
</dbReference>
<dbReference type="Gene3D" id="3.40.366.10">
    <property type="entry name" value="Malonyl-Coenzyme A Acyl Carrier Protein, domain 2"/>
    <property type="match status" value="1"/>
</dbReference>
<dbReference type="Gene3D" id="3.10.129.110">
    <property type="entry name" value="Polyketide synthase dehydratase"/>
    <property type="match status" value="1"/>
</dbReference>
<dbReference type="InterPro" id="IPR001227">
    <property type="entry name" value="Ac_transferase_dom_sf"/>
</dbReference>
<dbReference type="InterPro" id="IPR036736">
    <property type="entry name" value="ACP-like_sf"/>
</dbReference>
<dbReference type="InterPro" id="IPR014043">
    <property type="entry name" value="Acyl_transferase_dom"/>
</dbReference>
<dbReference type="InterPro" id="IPR016035">
    <property type="entry name" value="Acyl_Trfase/lysoPLipase"/>
</dbReference>
<dbReference type="InterPro" id="IPR018201">
    <property type="entry name" value="Ketoacyl_synth_AS"/>
</dbReference>
<dbReference type="InterPro" id="IPR014031">
    <property type="entry name" value="Ketoacyl_synth_C"/>
</dbReference>
<dbReference type="InterPro" id="IPR014030">
    <property type="entry name" value="Ketoacyl_synth_N"/>
</dbReference>
<dbReference type="InterPro" id="IPR016036">
    <property type="entry name" value="Malonyl_transacylase_ACP-bd"/>
</dbReference>
<dbReference type="InterPro" id="IPR020841">
    <property type="entry name" value="PKS_Beta-ketoAc_synthase_dom"/>
</dbReference>
<dbReference type="InterPro" id="IPR042104">
    <property type="entry name" value="PKS_dehydratase_sf"/>
</dbReference>
<dbReference type="InterPro" id="IPR049900">
    <property type="entry name" value="PKS_mFAS_DH"/>
</dbReference>
<dbReference type="InterPro" id="IPR050091">
    <property type="entry name" value="PKS_NRPS_Biosynth_Enz"/>
</dbReference>
<dbReference type="InterPro" id="IPR009081">
    <property type="entry name" value="PP-bd_ACP"/>
</dbReference>
<dbReference type="InterPro" id="IPR030918">
    <property type="entry name" value="PT_fungal_PKS"/>
</dbReference>
<dbReference type="InterPro" id="IPR032088">
    <property type="entry name" value="SAT"/>
</dbReference>
<dbReference type="InterPro" id="IPR016039">
    <property type="entry name" value="Thiolase-like"/>
</dbReference>
<dbReference type="NCBIfam" id="TIGR04532">
    <property type="entry name" value="PT_fungal_PKS"/>
    <property type="match status" value="1"/>
</dbReference>
<dbReference type="PANTHER" id="PTHR43775">
    <property type="entry name" value="FATTY ACID SYNTHASE"/>
    <property type="match status" value="1"/>
</dbReference>
<dbReference type="PANTHER" id="PTHR43775:SF37">
    <property type="entry name" value="SI:DKEY-61P9.11"/>
    <property type="match status" value="1"/>
</dbReference>
<dbReference type="Pfam" id="PF00698">
    <property type="entry name" value="Acyl_transf_1"/>
    <property type="match status" value="1"/>
</dbReference>
<dbReference type="Pfam" id="PF22621">
    <property type="entry name" value="CurL-like_PKS_C"/>
    <property type="match status" value="1"/>
</dbReference>
<dbReference type="Pfam" id="PF00109">
    <property type="entry name" value="ketoacyl-synt"/>
    <property type="match status" value="1"/>
</dbReference>
<dbReference type="Pfam" id="PF02801">
    <property type="entry name" value="Ketoacyl-synt_C"/>
    <property type="match status" value="1"/>
</dbReference>
<dbReference type="Pfam" id="PF00550">
    <property type="entry name" value="PP-binding"/>
    <property type="match status" value="1"/>
</dbReference>
<dbReference type="Pfam" id="PF16073">
    <property type="entry name" value="SAT"/>
    <property type="match status" value="1"/>
</dbReference>
<dbReference type="SMART" id="SM00827">
    <property type="entry name" value="PKS_AT"/>
    <property type="match status" value="1"/>
</dbReference>
<dbReference type="SMART" id="SM00825">
    <property type="entry name" value="PKS_KS"/>
    <property type="match status" value="1"/>
</dbReference>
<dbReference type="SUPFAM" id="SSF47336">
    <property type="entry name" value="ACP-like"/>
    <property type="match status" value="1"/>
</dbReference>
<dbReference type="SUPFAM" id="SSF52151">
    <property type="entry name" value="FabD/lysophospholipase-like"/>
    <property type="match status" value="1"/>
</dbReference>
<dbReference type="SUPFAM" id="SSF55048">
    <property type="entry name" value="Probable ACP-binding domain of malonyl-CoA ACP transacylase"/>
    <property type="match status" value="1"/>
</dbReference>
<dbReference type="SUPFAM" id="SSF53901">
    <property type="entry name" value="Thiolase-like"/>
    <property type="match status" value="1"/>
</dbReference>
<dbReference type="PROSITE" id="PS50075">
    <property type="entry name" value="CARRIER"/>
    <property type="match status" value="1"/>
</dbReference>
<dbReference type="PROSITE" id="PS00606">
    <property type="entry name" value="KS3_1"/>
    <property type="match status" value="1"/>
</dbReference>
<dbReference type="PROSITE" id="PS52004">
    <property type="entry name" value="KS3_2"/>
    <property type="match status" value="1"/>
</dbReference>
<dbReference type="PROSITE" id="PS52019">
    <property type="entry name" value="PKS_MFAS_DH"/>
    <property type="match status" value="1"/>
</dbReference>
<sequence length="1751" mass="192912">MRIFHFSNKFPPDDLADLFRRLRLHSKCPNHVILARVLEEVTDVVREEIAELPAELRSLLPPFQSILDLAESFNWHQGPLSGTFECVFLVLMPVCLFVGRPDEFVFRRDTSLFTGLGLGFLAATAIVASPSLCSVPVTVAEVVRMAMRTGLLIYQRSQDLEPQSLDGALESWTSIVKGMGEVAVREGIDEYNSSTDTPQPSSIYISVVEPDGSVFINGPPSRLRKFFSTSGKVQSAAHAPLPVYGGPCHAPHLYDHSHSSWAVKKCRAKVLSRDLSHAAYLLSMADGNPLKADTVLELFESATYILLTSIIRWGDVVNAITASSPLLEKDMKLQVEILRPSPVVDGLVSAIQKSHPGCSAYVVDLGEWIFDDTHISPHGAHEKIAVIGMSCRLPGGADDLELLWELLREGRDVHRKVPADRYDVDSHTDITGKQRNTSHTPFGCFVDQPGLFDAGFFDMSPREAGQTDPTHRLALLTAYEALEQSGYVPDRTRSTRRERVGTIYGQCSDDYRECNAGQDIDMYFIPGNYRAFAPGRISYFFKFSGPSFNIDTACSASLAAVQIACSVLSRGEADMVVAGGLNILTGSDSFAGLSKGFFLSKTGNCQVFDDAADGYCRGDGIGSIILKRLSDAQQDNDNILGLILGSATNHSSNAISITHPHAPTQANLYRSTLMQAGVRPQDVDLVEMHGTGTQAGDAAEIESVTKVFSPAVPRRSQPLRISSVKANVGHGEAAAGITALIKALLIFKHNEIPPQVCLRTTLNSKFPDLRQLNVHIPKKIIPWPRLPGRKRYIMVNNFSAAGGNTSLLLEEPPARPDPKGCPQTRFVVTVSAKSTVSLIRNLEGLLGFLKMDPFVDLASLAYTTTARRMHHKYRIVVHGASIQEIVKSLEQHISIAETQCAIQKAPTIGFVFSGQGSFSQGVGRQLFQEYPPYRNEIQRLDEICTSHGFDSILPAITSRSSDILEISPFMAQLVTVCVQIALCRLWRSLGVIPNVVVGASLGEYAALYAAGTLSASDVIYLVGQRARLMQELCTINSHSMLAVKATIGEIRHTVRNNAYEFACINGPRDVTLAASVEDINDIQQTLVSQGYRVAKLNVPFAFHSSQIEPILEPYNKIAHSVIFRNLKTALISPLLSDVVFDNKSFPPSYLRDSTRGTVQFSDAMTKAQEIGLVDSKTVWVEIGVHQTYTGAMRANIPNLEVVAPSLRSDESNWHTLAASMSALHSAGVHLDWNTWYKPFESQLRLLNLPPYQWNLKNHWIQHNGDWLLLKDKRSRTGYERSPAPAPPPLRTALVHHILEESFGKDGGTVVIQSNVTDDEFHAVASGHQMSGRPLVSVFAYTDIALIMARYMYSRLKSGTELSAMDFGKVRVFQGLIPRKDRSKPQYVRMRMQADPMCSSMPLSLHRVLDDEMNEEELAIGVVTCGDSHSWRDEWAAYSYLLTSRIEALHQLADQGLASRVSKDLVYTLFKNVVDYAEHYRGIQSAVMYGLEAVADVILSPSQDSRWTAPPHHIDPITHVGGLILNAGPAMDHTNTIYIMEGWESMRFSDSLMAGELYRSYVKMNPANDNSGFFSGDVYILHGNRVIGRVREMTLRPLPRILMSRFFDPPDSQYGQMAQQEPSTALPSTPQHTSSAKTTESTPSQQDESDNTSLATPENENKAPISGSWPNANSQLVRDAIALIASETGVEPDALTDETEFSAVGVDSLLSLVLVEKFALELNIDLQGSFFLETPNVCDLKAYLEGNQMTLR</sequence>
<accession>B8N8R0</accession>
<reference key="1">
    <citation type="journal article" date="2015" name="Genome Announc.">
        <title>Genome sequence of Aspergillus flavus NRRL 3357, a strain that causes aflatoxin contamination of food and feed.</title>
        <authorList>
            <person name="Nierman W.C."/>
            <person name="Yu J."/>
            <person name="Fedorova-Abrams N.D."/>
            <person name="Losada L."/>
            <person name="Cleveland T.E."/>
            <person name="Bhatnagar D."/>
            <person name="Bennett J.W."/>
            <person name="Dean R."/>
            <person name="Payne G.A."/>
        </authorList>
    </citation>
    <scope>NUCLEOTIDE SEQUENCE [LARGE SCALE GENOMIC DNA]</scope>
    <source>
        <strain>ATCC 200026 / FGSC A1120 / IAM 13836 / NRRL 3357 / JCM 12722 / SRRC 167</strain>
    </source>
</reference>
<reference key="2">
    <citation type="journal article" date="1992" name="J. Nat. Prod.">
        <title>Aflavarin and beta-aflatrem: new anti-insectan metabolites from the sclerotia of Aspergillus flavus.</title>
        <authorList>
            <person name="TePaske M.R."/>
            <person name="Gloer J.B."/>
            <person name="Wicklow D.T."/>
            <person name="Dowd P.F."/>
        </authorList>
    </citation>
    <scope>FUNCTION</scope>
</reference>
<reference key="3">
    <citation type="journal article" date="2015" name="Eukaryot. Cell">
        <title>Transcriptome analysis of Aspergillus flavus reveals veA-dependent regulation of secondary metabolite gene clusters, including the novel aflavarin cluster.</title>
        <authorList>
            <person name="Cary J.W."/>
            <person name="Han Z."/>
            <person name="Yin Y."/>
            <person name="Lohmar J.M."/>
            <person name="Shantappa S."/>
            <person name="Harris-Coward P.Y."/>
            <person name="Mack B."/>
            <person name="Ehrlich K.C."/>
            <person name="Wei Q."/>
            <person name="Arroyo-Manzanares N."/>
            <person name="Uka V."/>
            <person name="Vanhaecke L."/>
            <person name="Bhatnagar D."/>
            <person name="Yu J."/>
            <person name="Nierman W.C."/>
            <person name="Johns M.A."/>
            <person name="Sorensen D."/>
            <person name="Shen H."/>
            <person name="De Saeger S."/>
            <person name="Diana Di Mavungu J."/>
            <person name="Calvo A.M."/>
        </authorList>
    </citation>
    <scope>FUNCTION</scope>
    <scope>DISRUPTION PHENOTYPE</scope>
    <scope>INDUCTION</scope>
    <scope>DOMAIN</scope>
    <scope>TISSUE SPECIFICITY</scope>
</reference>
<keyword id="KW-0012">Acyltransferase</keyword>
<keyword id="KW-0596">Phosphopantetheine</keyword>
<keyword id="KW-0597">Phosphoprotein</keyword>
<keyword id="KW-0808">Transferase</keyword>
<protein>
    <recommendedName>
        <fullName evidence="10">Non-reducing polyketide synthase afvB</fullName>
        <shortName evidence="11">NRPKS</shortName>
        <ecNumber evidence="12">2.3.1.-</ecNumber>
    </recommendedName>
    <alternativeName>
        <fullName evidence="10">Aflavarin synthesis protein B</fullName>
    </alternativeName>
</protein>
<feature type="chain" id="PRO_0000436109" description="Non-reducing polyketide synthase afvB">
    <location>
        <begin position="1"/>
        <end position="1751"/>
    </location>
</feature>
<feature type="domain" description="Ketosynthase family 3 (KS3)" evidence="5">
    <location>
        <begin position="381"/>
        <end position="811"/>
    </location>
</feature>
<feature type="domain" description="PKS/mFAS DH" evidence="6">
    <location>
        <begin position="1295"/>
        <end position="1603"/>
    </location>
</feature>
<feature type="domain" description="Carrier" evidence="4">
    <location>
        <begin position="1670"/>
        <end position="1747"/>
    </location>
</feature>
<feature type="region of interest" description="N-terminal acylcarrier protein transacylase domain (SAT)" evidence="3">
    <location>
        <begin position="19"/>
        <end position="249"/>
    </location>
</feature>
<feature type="region of interest" description="Malonyl-CoA:ACP transacylase (MAT) domain" evidence="3">
    <location>
        <begin position="910"/>
        <end position="1228"/>
    </location>
</feature>
<feature type="region of interest" description="Product template (PT) domain" evidence="3">
    <location>
        <begin position="1291"/>
        <end position="1607"/>
    </location>
</feature>
<feature type="region of interest" description="N-terminal hotdog fold" evidence="6">
    <location>
        <begin position="1295"/>
        <end position="1429"/>
    </location>
</feature>
<feature type="region of interest" description="C-terminal hotdog fold" evidence="6">
    <location>
        <begin position="1456"/>
        <end position="1603"/>
    </location>
</feature>
<feature type="region of interest" description="Disordered" evidence="7">
    <location>
        <begin position="1610"/>
        <end position="1670"/>
    </location>
</feature>
<feature type="compositionally biased region" description="Polar residues" evidence="7">
    <location>
        <begin position="1612"/>
        <end position="1657"/>
    </location>
</feature>
<feature type="active site" description="For beta-ketoacyl synthase activity" evidence="5">
    <location>
        <position position="554"/>
    </location>
</feature>
<feature type="active site" description="For beta-ketoacyl synthase activity" evidence="5">
    <location>
        <position position="689"/>
    </location>
</feature>
<feature type="active site" description="For beta-ketoacyl synthase activity" evidence="5">
    <location>
        <position position="730"/>
    </location>
</feature>
<feature type="active site" description="Proton acceptor; for dehydratase activity" evidence="6">
    <location>
        <position position="1327"/>
    </location>
</feature>
<feature type="active site" description="Proton donor; for dehydratase activity" evidence="6">
    <location>
        <position position="1514"/>
    </location>
</feature>
<feature type="modified residue" description="O-(pantetheine 4'-phosphoryl)serine" evidence="4">
    <location>
        <position position="1707"/>
    </location>
</feature>
<gene>
    <name evidence="10" type="primary">afvB</name>
    <name evidence="13" type="ORF">AFLA_108550</name>
</gene>
<name>AFVB_ASPFN</name>
<organism>
    <name type="scientific">Aspergillus flavus (strain ATCC 200026 / FGSC A1120 / IAM 13836 / NRRL 3357 / JCM 12722 / SRRC 167)</name>
    <dbReference type="NCBI Taxonomy" id="332952"/>
    <lineage>
        <taxon>Eukaryota</taxon>
        <taxon>Fungi</taxon>
        <taxon>Dikarya</taxon>
        <taxon>Ascomycota</taxon>
        <taxon>Pezizomycotina</taxon>
        <taxon>Eurotiomycetes</taxon>
        <taxon>Eurotiomycetidae</taxon>
        <taxon>Eurotiales</taxon>
        <taxon>Aspergillaceae</taxon>
        <taxon>Aspergillus</taxon>
        <taxon>Aspergillus subgen. Circumdati</taxon>
    </lineage>
</organism>
<proteinExistence type="evidence at transcript level"/>
<comment type="function">
    <text evidence="8 9">Non-reducing polyketide synthase (NRPKS); part of the gene cluster that mediates the biosynthesis of aflavarin, a bicoumarin that exhibits anti-insectan activity against the fungivorous beetle C.hemipterus (PubMed:26209694, Ref.2). Catalyzes the formation of the aromatic polyketide from acetyl coenzyme A and seven malonyl coenzyme A molecules (PubMed:26209694).</text>
</comment>
<comment type="cofactor">
    <cofactor evidence="1">
        <name>pantetheine 4'-phosphate</name>
        <dbReference type="ChEBI" id="CHEBI:47942"/>
    </cofactor>
    <text evidence="3">Binds 1 phosphopantetheine covalently.</text>
</comment>
<comment type="pathway">
    <text evidence="12">Secondary metabolite biosynthesis.</text>
</comment>
<comment type="tissue specificity">
    <text evidence="8">Expressed mainly in sclerotia, with expression levels 20-fold and 10-fold greater than the expression levels of this gene found in mycelium and conidia, respectively (PubMed:26209694).</text>
</comment>
<comment type="induction">
    <text evidence="8">Expression is induced by the developmental and secondary metabolism regulator veA (PubMed:26209694).</text>
</comment>
<comment type="domain">
    <text evidence="2 12">Multidomain protein; including a starter unit:ACP transacylase (SAT) that selects the starter unit; a ketosynthase (KS) that catalyzes repeated decarboxylative condensation to elongate the polyketide backbone; a malonyl-CoA:ACP transacylase (MAT) that selects and transfers the extender unit malonyl-CoA; a product template (PT) domain that controls the immediate cyclization regioselectivity of the reactive polyketide backbone; and an acyl-carrier protein (ACP) that serves as the tether of the growing and completed polyketide via its phosphopantetheinyl arm (PubMed:26209694).</text>
</comment>
<comment type="disruption phenotype">
    <text evidence="8">Impairs aflavarin biosynthesis and leads to a reduction of sclerotial production (PubMed:26209694).</text>
</comment>
<evidence type="ECO:0000250" key="1">
    <source>
        <dbReference type="UniProtKB" id="A0A0K0MCJ4"/>
    </source>
</evidence>
<evidence type="ECO:0000250" key="2">
    <source>
        <dbReference type="UniProtKB" id="Q5B0D0"/>
    </source>
</evidence>
<evidence type="ECO:0000255" key="3"/>
<evidence type="ECO:0000255" key="4">
    <source>
        <dbReference type="PROSITE-ProRule" id="PRU00258"/>
    </source>
</evidence>
<evidence type="ECO:0000255" key="5">
    <source>
        <dbReference type="PROSITE-ProRule" id="PRU01348"/>
    </source>
</evidence>
<evidence type="ECO:0000255" key="6">
    <source>
        <dbReference type="PROSITE-ProRule" id="PRU01363"/>
    </source>
</evidence>
<evidence type="ECO:0000256" key="7">
    <source>
        <dbReference type="SAM" id="MobiDB-lite"/>
    </source>
</evidence>
<evidence type="ECO:0000269" key="8">
    <source>
    </source>
</evidence>
<evidence type="ECO:0000269" key="9">
    <source ref="2"/>
</evidence>
<evidence type="ECO:0000303" key="10">
    <source>
    </source>
</evidence>
<evidence type="ECO:0000305" key="11"/>
<evidence type="ECO:0000305" key="12">
    <source>
    </source>
</evidence>
<evidence type="ECO:0000312" key="13">
    <source>
        <dbReference type="EMBL" id="EED53479.1"/>
    </source>
</evidence>